<feature type="chain" id="PRO_1000132088" description="Protein nucleotidyltransferase YdiU">
    <location>
        <begin position="1"/>
        <end position="488"/>
    </location>
</feature>
<feature type="active site" description="Proton acceptor" evidence="1">
    <location>
        <position position="253"/>
    </location>
</feature>
<feature type="binding site" evidence="1">
    <location>
        <position position="91"/>
    </location>
    <ligand>
        <name>ATP</name>
        <dbReference type="ChEBI" id="CHEBI:30616"/>
    </ligand>
</feature>
<feature type="binding site" evidence="1">
    <location>
        <position position="93"/>
    </location>
    <ligand>
        <name>ATP</name>
        <dbReference type="ChEBI" id="CHEBI:30616"/>
    </ligand>
</feature>
<feature type="binding site" evidence="1">
    <location>
        <position position="94"/>
    </location>
    <ligand>
        <name>ATP</name>
        <dbReference type="ChEBI" id="CHEBI:30616"/>
    </ligand>
</feature>
<feature type="binding site" evidence="1">
    <location>
        <position position="114"/>
    </location>
    <ligand>
        <name>ATP</name>
        <dbReference type="ChEBI" id="CHEBI:30616"/>
    </ligand>
</feature>
<feature type="binding site" evidence="1">
    <location>
        <position position="126"/>
    </location>
    <ligand>
        <name>ATP</name>
        <dbReference type="ChEBI" id="CHEBI:30616"/>
    </ligand>
</feature>
<feature type="binding site" evidence="1">
    <location>
        <position position="127"/>
    </location>
    <ligand>
        <name>ATP</name>
        <dbReference type="ChEBI" id="CHEBI:30616"/>
    </ligand>
</feature>
<feature type="binding site" evidence="1">
    <location>
        <position position="177"/>
    </location>
    <ligand>
        <name>ATP</name>
        <dbReference type="ChEBI" id="CHEBI:30616"/>
    </ligand>
</feature>
<feature type="binding site" evidence="1">
    <location>
        <position position="184"/>
    </location>
    <ligand>
        <name>ATP</name>
        <dbReference type="ChEBI" id="CHEBI:30616"/>
    </ligand>
</feature>
<feature type="binding site" evidence="1">
    <location>
        <position position="254"/>
    </location>
    <ligand>
        <name>Mg(2+)</name>
        <dbReference type="ChEBI" id="CHEBI:18420"/>
    </ligand>
</feature>
<feature type="binding site" evidence="1">
    <location>
        <position position="263"/>
    </location>
    <ligand>
        <name>ATP</name>
        <dbReference type="ChEBI" id="CHEBI:30616"/>
    </ligand>
</feature>
<feature type="binding site" evidence="1">
    <location>
        <position position="263"/>
    </location>
    <ligand>
        <name>Mg(2+)</name>
        <dbReference type="ChEBI" id="CHEBI:18420"/>
    </ligand>
</feature>
<evidence type="ECO:0000255" key="1">
    <source>
        <dbReference type="HAMAP-Rule" id="MF_00692"/>
    </source>
</evidence>
<proteinExistence type="inferred from homology"/>
<dbReference type="EC" id="2.7.7.-" evidence="1"/>
<dbReference type="EC" id="2.7.7.108" evidence="1"/>
<dbReference type="EMBL" id="CP001176">
    <property type="protein sequence ID" value="ACK61238.1"/>
    <property type="molecule type" value="Genomic_DNA"/>
</dbReference>
<dbReference type="RefSeq" id="WP_000164914.1">
    <property type="nucleotide sequence ID" value="NC_011725.1"/>
</dbReference>
<dbReference type="SMR" id="B7H8P4"/>
<dbReference type="KEGG" id="bcb:BCB4264_A3508"/>
<dbReference type="HOGENOM" id="CLU_010245_4_1_9"/>
<dbReference type="Proteomes" id="UP000007096">
    <property type="component" value="Chromosome"/>
</dbReference>
<dbReference type="GO" id="GO:0070733">
    <property type="term" value="F:AMPylase activity"/>
    <property type="evidence" value="ECO:0007669"/>
    <property type="project" value="TreeGrafter"/>
</dbReference>
<dbReference type="GO" id="GO:0005524">
    <property type="term" value="F:ATP binding"/>
    <property type="evidence" value="ECO:0007669"/>
    <property type="project" value="UniProtKB-UniRule"/>
</dbReference>
<dbReference type="GO" id="GO:0000287">
    <property type="term" value="F:magnesium ion binding"/>
    <property type="evidence" value="ECO:0007669"/>
    <property type="project" value="UniProtKB-UniRule"/>
</dbReference>
<dbReference type="HAMAP" id="MF_00692">
    <property type="entry name" value="YdiU_SelO"/>
    <property type="match status" value="1"/>
</dbReference>
<dbReference type="InterPro" id="IPR003846">
    <property type="entry name" value="SelO"/>
</dbReference>
<dbReference type="NCBIfam" id="NF000658">
    <property type="entry name" value="PRK00029.1"/>
    <property type="match status" value="1"/>
</dbReference>
<dbReference type="PANTHER" id="PTHR32057">
    <property type="entry name" value="PROTEIN ADENYLYLTRANSFERASE SELO, MITOCHONDRIAL"/>
    <property type="match status" value="1"/>
</dbReference>
<dbReference type="PANTHER" id="PTHR32057:SF14">
    <property type="entry name" value="PROTEIN ADENYLYLTRANSFERASE SELO, MITOCHONDRIAL"/>
    <property type="match status" value="1"/>
</dbReference>
<dbReference type="Pfam" id="PF02696">
    <property type="entry name" value="SelO"/>
    <property type="match status" value="1"/>
</dbReference>
<comment type="function">
    <text evidence="1">Nucleotidyltransferase involved in the post-translational modification of proteins. It can catalyze the addition of adenosine monophosphate (AMP) or uridine monophosphate (UMP) to a protein, resulting in modifications known as AMPylation and UMPylation.</text>
</comment>
<comment type="catalytic activity">
    <reaction evidence="1">
        <text>L-seryl-[protein] + ATP = 3-O-(5'-adenylyl)-L-seryl-[protein] + diphosphate</text>
        <dbReference type="Rhea" id="RHEA:58120"/>
        <dbReference type="Rhea" id="RHEA-COMP:9863"/>
        <dbReference type="Rhea" id="RHEA-COMP:15073"/>
        <dbReference type="ChEBI" id="CHEBI:29999"/>
        <dbReference type="ChEBI" id="CHEBI:30616"/>
        <dbReference type="ChEBI" id="CHEBI:33019"/>
        <dbReference type="ChEBI" id="CHEBI:142516"/>
        <dbReference type="EC" id="2.7.7.108"/>
    </reaction>
</comment>
<comment type="catalytic activity">
    <reaction evidence="1">
        <text>L-threonyl-[protein] + ATP = 3-O-(5'-adenylyl)-L-threonyl-[protein] + diphosphate</text>
        <dbReference type="Rhea" id="RHEA:54292"/>
        <dbReference type="Rhea" id="RHEA-COMP:11060"/>
        <dbReference type="Rhea" id="RHEA-COMP:13847"/>
        <dbReference type="ChEBI" id="CHEBI:30013"/>
        <dbReference type="ChEBI" id="CHEBI:30616"/>
        <dbReference type="ChEBI" id="CHEBI:33019"/>
        <dbReference type="ChEBI" id="CHEBI:138113"/>
        <dbReference type="EC" id="2.7.7.108"/>
    </reaction>
</comment>
<comment type="catalytic activity">
    <reaction evidence="1">
        <text>L-tyrosyl-[protein] + ATP = O-(5'-adenylyl)-L-tyrosyl-[protein] + diphosphate</text>
        <dbReference type="Rhea" id="RHEA:54288"/>
        <dbReference type="Rhea" id="RHEA-COMP:10136"/>
        <dbReference type="Rhea" id="RHEA-COMP:13846"/>
        <dbReference type="ChEBI" id="CHEBI:30616"/>
        <dbReference type="ChEBI" id="CHEBI:33019"/>
        <dbReference type="ChEBI" id="CHEBI:46858"/>
        <dbReference type="ChEBI" id="CHEBI:83624"/>
        <dbReference type="EC" id="2.7.7.108"/>
    </reaction>
</comment>
<comment type="catalytic activity">
    <reaction evidence="1">
        <text>L-histidyl-[protein] + UTP = N(tele)-(5'-uridylyl)-L-histidyl-[protein] + diphosphate</text>
        <dbReference type="Rhea" id="RHEA:83891"/>
        <dbReference type="Rhea" id="RHEA-COMP:9745"/>
        <dbReference type="Rhea" id="RHEA-COMP:20239"/>
        <dbReference type="ChEBI" id="CHEBI:29979"/>
        <dbReference type="ChEBI" id="CHEBI:33019"/>
        <dbReference type="ChEBI" id="CHEBI:46398"/>
        <dbReference type="ChEBI" id="CHEBI:233474"/>
    </reaction>
</comment>
<comment type="catalytic activity">
    <reaction evidence="1">
        <text>L-seryl-[protein] + UTP = O-(5'-uridylyl)-L-seryl-[protein] + diphosphate</text>
        <dbReference type="Rhea" id="RHEA:64604"/>
        <dbReference type="Rhea" id="RHEA-COMP:9863"/>
        <dbReference type="Rhea" id="RHEA-COMP:16635"/>
        <dbReference type="ChEBI" id="CHEBI:29999"/>
        <dbReference type="ChEBI" id="CHEBI:33019"/>
        <dbReference type="ChEBI" id="CHEBI:46398"/>
        <dbReference type="ChEBI" id="CHEBI:156051"/>
    </reaction>
</comment>
<comment type="catalytic activity">
    <reaction evidence="1">
        <text>L-tyrosyl-[protein] + UTP = O-(5'-uridylyl)-L-tyrosyl-[protein] + diphosphate</text>
        <dbReference type="Rhea" id="RHEA:83887"/>
        <dbReference type="Rhea" id="RHEA-COMP:10136"/>
        <dbReference type="Rhea" id="RHEA-COMP:20238"/>
        <dbReference type="ChEBI" id="CHEBI:33019"/>
        <dbReference type="ChEBI" id="CHEBI:46398"/>
        <dbReference type="ChEBI" id="CHEBI:46858"/>
        <dbReference type="ChEBI" id="CHEBI:90602"/>
    </reaction>
</comment>
<comment type="cofactor">
    <cofactor evidence="1">
        <name>Mg(2+)</name>
        <dbReference type="ChEBI" id="CHEBI:18420"/>
    </cofactor>
    <cofactor evidence="1">
        <name>Mn(2+)</name>
        <dbReference type="ChEBI" id="CHEBI:29035"/>
    </cofactor>
</comment>
<comment type="similarity">
    <text evidence="1">Belongs to the SELO family.</text>
</comment>
<keyword id="KW-0067">ATP-binding</keyword>
<keyword id="KW-0460">Magnesium</keyword>
<keyword id="KW-0464">Manganese</keyword>
<keyword id="KW-0479">Metal-binding</keyword>
<keyword id="KW-0547">Nucleotide-binding</keyword>
<keyword id="KW-0548">Nucleotidyltransferase</keyword>
<keyword id="KW-0808">Transferase</keyword>
<accession>B7H8P4</accession>
<protein>
    <recommendedName>
        <fullName evidence="1">Protein nucleotidyltransferase YdiU</fullName>
        <ecNumber evidence="1">2.7.7.-</ecNumber>
    </recommendedName>
    <alternativeName>
        <fullName evidence="1">Protein adenylyltransferase YdiU</fullName>
        <ecNumber evidence="1">2.7.7.108</ecNumber>
    </alternativeName>
    <alternativeName>
        <fullName evidence="1">Protein uridylyltransferase YdiU</fullName>
        <ecNumber evidence="1">2.7.7.-</ecNumber>
    </alternativeName>
</protein>
<sequence length="488" mass="55083">MTKNNETGWNLDNSYTTLPQSFYTEIPPTPVSSPELVKLNHSLAISLGLTPEELKKEAEIAIFAGNALPEGAHPLAQAYAGHQFGHFNMLGDGRALLIGEQITPSGERFDIQLKGSGPTPYSRRGDGRAALGPMLREYIISEAMYALDIPTTRSLAVVTTGEPTYRETKLPGAILTRVASSHIRVGTFQYAAARGSIEDLKSLADYTIKRHYPEIESHENQYTALLQEVIKRQASLIAKWQLVGFIHGVMNTDNITISGETIDYGPCAFMDNYDQGTVFSSIDTQGRYAYGNQPYMAAWDLARLAESLIPILHEDEEEALKIAQDEISKFSVQYEKQWFLGMKKKLGLFSNEEQAHSLIEQLLKMMEKYKADYTNTFRSLTLDAIENTALFESPEFKEWYKLWQSRLDRQEQSKENAYEMMKNNNPSIIPRNHRVEEALEAAVTNDDYSVMEKLLEALSNPYAYSTDQEEYCIPPAPTNRPYRTFCGT</sequence>
<reference key="1">
    <citation type="submission" date="2008-10" db="EMBL/GenBank/DDBJ databases">
        <title>Genome sequence of Bacillus cereus B4264.</title>
        <authorList>
            <person name="Dodson R.J."/>
            <person name="Durkin A.S."/>
            <person name="Rosovitz M.J."/>
            <person name="Rasko D.A."/>
            <person name="Hoffmaster A."/>
            <person name="Ravel J."/>
            <person name="Sutton G."/>
        </authorList>
    </citation>
    <scope>NUCLEOTIDE SEQUENCE [LARGE SCALE GENOMIC DNA]</scope>
    <source>
        <strain>B4264</strain>
    </source>
</reference>
<name>SELO_BACC4</name>
<organism>
    <name type="scientific">Bacillus cereus (strain B4264)</name>
    <dbReference type="NCBI Taxonomy" id="405532"/>
    <lineage>
        <taxon>Bacteria</taxon>
        <taxon>Bacillati</taxon>
        <taxon>Bacillota</taxon>
        <taxon>Bacilli</taxon>
        <taxon>Bacillales</taxon>
        <taxon>Bacillaceae</taxon>
        <taxon>Bacillus</taxon>
        <taxon>Bacillus cereus group</taxon>
    </lineage>
</organism>
<gene>
    <name evidence="1" type="primary">ydiU</name>
    <name evidence="1" type="synonym">selO</name>
    <name type="ordered locus">BCB4264_A3508</name>
</gene>